<evidence type="ECO:0000255" key="1">
    <source>
        <dbReference type="HAMAP-Rule" id="MF_01302"/>
    </source>
</evidence>
<evidence type="ECO:0000305" key="2"/>
<reference key="1">
    <citation type="journal article" date="2004" name="Proc. Natl. Acad. Sci. U.S.A.">
        <title>The complete genomic sequence of Nocardia farcinica IFM 10152.</title>
        <authorList>
            <person name="Ishikawa J."/>
            <person name="Yamashita A."/>
            <person name="Mikami Y."/>
            <person name="Hoshino Y."/>
            <person name="Kurita H."/>
            <person name="Hotta K."/>
            <person name="Shiba T."/>
            <person name="Hattori M."/>
        </authorList>
    </citation>
    <scope>NUCLEOTIDE SEQUENCE [LARGE SCALE GENOMIC DNA]</scope>
    <source>
        <strain>IFM 10152</strain>
    </source>
</reference>
<name>RS8_NOCFA</name>
<sequence>MTMTDPIADFLTRLRNANSAYHDQVKAPHSKLKANIAEILKREGYIADYRTEDAQVGKTLVVDLKYGPSRERSLAGVRRVSKPGLRVYAKSTNLPKVLGGLGVAIISTSQGLLTDKQAAKQGVGGEVLAYVW</sequence>
<accession>Q5Z1Q8</accession>
<keyword id="KW-1185">Reference proteome</keyword>
<keyword id="KW-0687">Ribonucleoprotein</keyword>
<keyword id="KW-0689">Ribosomal protein</keyword>
<keyword id="KW-0694">RNA-binding</keyword>
<keyword id="KW-0699">rRNA-binding</keyword>
<dbReference type="EMBL" id="AP006618">
    <property type="protein sequence ID" value="BAD55633.1"/>
    <property type="molecule type" value="Genomic_DNA"/>
</dbReference>
<dbReference type="RefSeq" id="WP_011207319.1">
    <property type="nucleotide sequence ID" value="NC_006361.1"/>
</dbReference>
<dbReference type="SMR" id="Q5Z1Q8"/>
<dbReference type="STRING" id="247156.NFA_7880"/>
<dbReference type="GeneID" id="61131619"/>
<dbReference type="KEGG" id="nfa:NFA_7880"/>
<dbReference type="eggNOG" id="COG0096">
    <property type="taxonomic scope" value="Bacteria"/>
</dbReference>
<dbReference type="HOGENOM" id="CLU_098428_0_1_11"/>
<dbReference type="OrthoDB" id="9802617at2"/>
<dbReference type="Proteomes" id="UP000006820">
    <property type="component" value="Chromosome"/>
</dbReference>
<dbReference type="GO" id="GO:1990904">
    <property type="term" value="C:ribonucleoprotein complex"/>
    <property type="evidence" value="ECO:0007669"/>
    <property type="project" value="UniProtKB-KW"/>
</dbReference>
<dbReference type="GO" id="GO:0005840">
    <property type="term" value="C:ribosome"/>
    <property type="evidence" value="ECO:0007669"/>
    <property type="project" value="UniProtKB-KW"/>
</dbReference>
<dbReference type="GO" id="GO:0019843">
    <property type="term" value="F:rRNA binding"/>
    <property type="evidence" value="ECO:0007669"/>
    <property type="project" value="UniProtKB-UniRule"/>
</dbReference>
<dbReference type="GO" id="GO:0003735">
    <property type="term" value="F:structural constituent of ribosome"/>
    <property type="evidence" value="ECO:0007669"/>
    <property type="project" value="InterPro"/>
</dbReference>
<dbReference type="GO" id="GO:0006412">
    <property type="term" value="P:translation"/>
    <property type="evidence" value="ECO:0007669"/>
    <property type="project" value="UniProtKB-UniRule"/>
</dbReference>
<dbReference type="FunFam" id="3.30.1370.30:FF:000002">
    <property type="entry name" value="30S ribosomal protein S8"/>
    <property type="match status" value="1"/>
</dbReference>
<dbReference type="FunFam" id="3.30.1490.10:FF:000001">
    <property type="entry name" value="30S ribosomal protein S8"/>
    <property type="match status" value="1"/>
</dbReference>
<dbReference type="Gene3D" id="3.30.1370.30">
    <property type="match status" value="1"/>
</dbReference>
<dbReference type="Gene3D" id="3.30.1490.10">
    <property type="match status" value="1"/>
</dbReference>
<dbReference type="HAMAP" id="MF_01302_B">
    <property type="entry name" value="Ribosomal_uS8_B"/>
    <property type="match status" value="1"/>
</dbReference>
<dbReference type="InterPro" id="IPR000630">
    <property type="entry name" value="Ribosomal_uS8"/>
</dbReference>
<dbReference type="InterPro" id="IPR047863">
    <property type="entry name" value="Ribosomal_uS8_CS"/>
</dbReference>
<dbReference type="InterPro" id="IPR035987">
    <property type="entry name" value="Ribosomal_uS8_sf"/>
</dbReference>
<dbReference type="NCBIfam" id="NF001109">
    <property type="entry name" value="PRK00136.1"/>
    <property type="match status" value="1"/>
</dbReference>
<dbReference type="PANTHER" id="PTHR11758">
    <property type="entry name" value="40S RIBOSOMAL PROTEIN S15A"/>
    <property type="match status" value="1"/>
</dbReference>
<dbReference type="Pfam" id="PF00410">
    <property type="entry name" value="Ribosomal_S8"/>
    <property type="match status" value="1"/>
</dbReference>
<dbReference type="SUPFAM" id="SSF56047">
    <property type="entry name" value="Ribosomal protein S8"/>
    <property type="match status" value="1"/>
</dbReference>
<dbReference type="PROSITE" id="PS00053">
    <property type="entry name" value="RIBOSOMAL_S8"/>
    <property type="match status" value="1"/>
</dbReference>
<proteinExistence type="inferred from homology"/>
<feature type="chain" id="PRO_0000126454" description="Small ribosomal subunit protein uS8">
    <location>
        <begin position="1"/>
        <end position="132"/>
    </location>
</feature>
<comment type="function">
    <text evidence="1">One of the primary rRNA binding proteins, it binds directly to 16S rRNA central domain where it helps coordinate assembly of the platform of the 30S subunit.</text>
</comment>
<comment type="subunit">
    <text evidence="1">Part of the 30S ribosomal subunit. Contacts proteins S5 and S12.</text>
</comment>
<comment type="similarity">
    <text evidence="1">Belongs to the universal ribosomal protein uS8 family.</text>
</comment>
<organism>
    <name type="scientific">Nocardia farcinica (strain IFM 10152)</name>
    <dbReference type="NCBI Taxonomy" id="247156"/>
    <lineage>
        <taxon>Bacteria</taxon>
        <taxon>Bacillati</taxon>
        <taxon>Actinomycetota</taxon>
        <taxon>Actinomycetes</taxon>
        <taxon>Mycobacteriales</taxon>
        <taxon>Nocardiaceae</taxon>
        <taxon>Nocardia</taxon>
    </lineage>
</organism>
<gene>
    <name evidence="1" type="primary">rpsH</name>
    <name type="ordered locus">NFA_7880</name>
</gene>
<protein>
    <recommendedName>
        <fullName evidence="1">Small ribosomal subunit protein uS8</fullName>
    </recommendedName>
    <alternativeName>
        <fullName evidence="2">30S ribosomal protein S8</fullName>
    </alternativeName>
</protein>